<gene>
    <name evidence="3" type="primary">NLP2</name>
</gene>
<keyword id="KW-1035">Host cytoplasm</keyword>
<keyword id="KW-0964">Secreted</keyword>
<keyword id="KW-0843">Virulence</keyword>
<proteinExistence type="evidence at transcript level"/>
<evidence type="ECO:0000269" key="1">
    <source>
    </source>
</evidence>
<evidence type="ECO:0000269" key="2">
    <source>
    </source>
</evidence>
<evidence type="ECO:0000303" key="3">
    <source>
    </source>
</evidence>
<evidence type="ECO:0000305" key="4"/>
<evidence type="ECO:0000305" key="5">
    <source>
    </source>
</evidence>
<evidence type="ECO:0000305" key="6">
    <source>
    </source>
</evidence>
<comment type="function">
    <text evidence="1 2">Probable secreted effector that may act as a pathogen-associated molecular pattern (PAMP) recognized by the plant immune system (PubMed:32117400). Seems not to induce necrosis, neither in several susceptible or resistant Vitis species nor in the dicot model plant Nicotiana benthamiana (PubMed:32117400, PubMed:35152834).</text>
</comment>
<comment type="subcellular location">
    <subcellularLocation>
        <location evidence="5">Secreted</location>
    </subcellularLocation>
    <subcellularLocation>
        <location evidence="1">Host cytoplasm</location>
    </subcellularLocation>
</comment>
<comment type="induction">
    <text evidence="1 2">Expressed strongly at the early stages of host infection (up to 24 hours after infection) but subsided quickly afterward.</text>
</comment>
<comment type="domain">
    <text evidence="5 6">The structure of NLP effectors is remarkably conserved with a high level of conservation of a central region containing the conserved undecapeptide motif AIMYAWYFPKD and heptapeptide motif GHRHDWE.</text>
</comment>
<comment type="similarity">
    <text evidence="4">Belongs to the Necrosis inducing protein (NPP1) family.</text>
</comment>
<feature type="chain" id="PRO_0000456939" description="NLP effector protein 2">
    <location>
        <begin position="1"/>
        <end position="223"/>
    </location>
</feature>
<feature type="short sequence motif" description="Conserved undecapeptide motif" evidence="5 6">
    <location>
        <begin position="90"/>
        <end position="100"/>
    </location>
</feature>
<feature type="short sequence motif" description="Conserved p motif" evidence="5 6">
    <location>
        <begin position="107"/>
        <end position="113"/>
    </location>
</feature>
<protein>
    <recommendedName>
        <fullName evidence="3">NLP effector protein 2</fullName>
    </recommendedName>
    <alternativeName>
        <fullName evidence="3">Nep1-like protein 2</fullName>
    </alternativeName>
</protein>
<dbReference type="EMBL" id="MN938411">
    <property type="protein sequence ID" value="QII89139.1"/>
    <property type="molecule type" value="mRNA"/>
</dbReference>
<dbReference type="SMR" id="A0A6G7KUY0"/>
<dbReference type="GO" id="GO:0005576">
    <property type="term" value="C:extracellular region"/>
    <property type="evidence" value="ECO:0007669"/>
    <property type="project" value="UniProtKB-SubCell"/>
</dbReference>
<dbReference type="GO" id="GO:0030430">
    <property type="term" value="C:host cell cytoplasm"/>
    <property type="evidence" value="ECO:0007669"/>
    <property type="project" value="UniProtKB-SubCell"/>
</dbReference>
<dbReference type="InterPro" id="IPR008701">
    <property type="entry name" value="NPP1"/>
</dbReference>
<dbReference type="PANTHER" id="PTHR33657">
    <property type="entry name" value="DOMAIN PROTEIN, PUTATIVE (AFU_ORTHOLOGUE AFUA_5G00600)-RELATED"/>
    <property type="match status" value="1"/>
</dbReference>
<dbReference type="PANTHER" id="PTHR33657:SF8">
    <property type="entry name" value="DOMAIN PROTEIN, PUTATIVE (AFU_ORTHOLOGUE AFUA_5G00600)-RELATED"/>
    <property type="match status" value="1"/>
</dbReference>
<dbReference type="Pfam" id="PF05630">
    <property type="entry name" value="NPP1"/>
    <property type="match status" value="1"/>
</dbReference>
<dbReference type="PIRSF" id="PIRSF029958">
    <property type="entry name" value="Necrosis-inducing_protein"/>
    <property type="match status" value="1"/>
</dbReference>
<reference key="1">
    <citation type="journal article" date="2020" name="Front. Plant Sci.">
        <title>Identification and characterization of Nep1-like proteins from the grapevine downy mildew pathogen Plasmopara viticola.</title>
        <authorList>
            <person name="Schumacher S."/>
            <person name="Grosser K."/>
            <person name="Voegele R.T."/>
            <person name="Kassemeyer H.H."/>
            <person name="Fuchs R."/>
        </authorList>
    </citation>
    <scope>NUCLEOTIDE SEQUENCE [MRNA]</scope>
    <scope>FUNCTION</scope>
    <scope>INDUCTION</scope>
    <scope>SUBCELLULAR LOCATION</scope>
    <scope>DOMAIN</scope>
    <source>
        <strain>Pv1446</strain>
    </source>
</reference>
<reference key="2">
    <citation type="journal article" date="2022" name="Plant Signal. Behav.">
        <title>Functional analysis of the Nep1-like proteins from Plasmopara viticola.</title>
        <authorList>
            <person name="Xiang J."/>
            <person name="Cheng J."/>
            <person name="Wei L."/>
            <person name="Li M."/>
            <person name="Wu J."/>
        </authorList>
    </citation>
    <scope>FUNCTION</scope>
    <scope>DOMAIN</scope>
    <scope>INDUCTION</scope>
</reference>
<name>NLP2_PLAVT</name>
<organism>
    <name type="scientific">Plasmopara viticola</name>
    <name type="common">Downy mildew of grapevine</name>
    <name type="synonym">Botrytis viticola</name>
    <dbReference type="NCBI Taxonomy" id="143451"/>
    <lineage>
        <taxon>Eukaryota</taxon>
        <taxon>Sar</taxon>
        <taxon>Stramenopiles</taxon>
        <taxon>Oomycota</taxon>
        <taxon>Peronosporales</taxon>
        <taxon>Peronosporaceae</taxon>
        <taxon>Plasmopara</taxon>
    </lineage>
</organism>
<accession>A0A6G7KUY0</accession>
<sequence>MSPWEAKWIRHSEVRPFPQPEPITVEEKVAVMLKPEIHVKNGCHPYPAVNDLGETNSGLKTKGAPSGMCKGSGWGSQVYGRHALFKGVWAIMYSWYFPKDMPSTDFGHRHDWEHVIVWIEKPVVENVKILAVTPSAHDGYSKQVPPNPGHLNGLAAKINYESKWPINHALEPTGLGGEKQDLILWEQLSSNARHALNIVHWGDANTPFNDYVFMGKLEKAFPL</sequence>